<dbReference type="EC" id="3.1.-.-" evidence="1"/>
<dbReference type="EMBL" id="FR796421">
    <property type="protein sequence ID" value="CAJ05240.1"/>
    <property type="molecule type" value="Genomic_DNA"/>
</dbReference>
<dbReference type="RefSeq" id="XP_001683888.1">
    <property type="nucleotide sequence ID" value="XM_001683836.1"/>
</dbReference>
<dbReference type="SMR" id="Q4Q9W0"/>
<dbReference type="STRING" id="5664.Q4Q9W0"/>
<dbReference type="EnsemblProtists" id="CAJ05240">
    <property type="protein sequence ID" value="CAJ05240"/>
    <property type="gene ID" value="LMJF_25_1330"/>
</dbReference>
<dbReference type="GeneID" id="5652544"/>
<dbReference type="KEGG" id="lma:LMJF_25_1330"/>
<dbReference type="VEuPathDB" id="TriTrypDB:LmjF.25.1330"/>
<dbReference type="VEuPathDB" id="TriTrypDB:LMJFC_250021200"/>
<dbReference type="VEuPathDB" id="TriTrypDB:LMJLV39_250020300"/>
<dbReference type="VEuPathDB" id="TriTrypDB:LMJSD75_250020100"/>
<dbReference type="eggNOG" id="KOG3005">
    <property type="taxonomic scope" value="Eukaryota"/>
</dbReference>
<dbReference type="InParanoid" id="Q4Q9W0"/>
<dbReference type="OMA" id="PWTIVCC"/>
<dbReference type="Proteomes" id="UP000000542">
    <property type="component" value="Chromosome 25"/>
</dbReference>
<dbReference type="GO" id="GO:0033557">
    <property type="term" value="C:Slx1-Slx4 complex"/>
    <property type="evidence" value="ECO:0007669"/>
    <property type="project" value="UniProtKB-UniRule"/>
</dbReference>
<dbReference type="GO" id="GO:0017108">
    <property type="term" value="F:5'-flap endonuclease activity"/>
    <property type="evidence" value="ECO:0007669"/>
    <property type="project" value="InterPro"/>
</dbReference>
<dbReference type="GO" id="GO:0008270">
    <property type="term" value="F:zinc ion binding"/>
    <property type="evidence" value="ECO:0007669"/>
    <property type="project" value="UniProtKB-KW"/>
</dbReference>
<dbReference type="GO" id="GO:0006310">
    <property type="term" value="P:DNA recombination"/>
    <property type="evidence" value="ECO:0007669"/>
    <property type="project" value="UniProtKB-UniRule"/>
</dbReference>
<dbReference type="GO" id="GO:0006281">
    <property type="term" value="P:DNA repair"/>
    <property type="evidence" value="ECO:0007669"/>
    <property type="project" value="UniProtKB-UniRule"/>
</dbReference>
<dbReference type="CDD" id="cd10455">
    <property type="entry name" value="GIY-YIG_SLX1"/>
    <property type="match status" value="1"/>
</dbReference>
<dbReference type="Gene3D" id="3.40.1440.10">
    <property type="entry name" value="GIY-YIG endonuclease"/>
    <property type="match status" value="1"/>
</dbReference>
<dbReference type="Gene3D" id="3.30.40.10">
    <property type="entry name" value="Zinc/RING finger domain, C3HC4 (zinc finger)"/>
    <property type="match status" value="1"/>
</dbReference>
<dbReference type="HAMAP" id="MF_03100">
    <property type="entry name" value="Endonuc_su_Slx1"/>
    <property type="match status" value="1"/>
</dbReference>
<dbReference type="InterPro" id="IPR000305">
    <property type="entry name" value="GIY-YIG_endonuc"/>
</dbReference>
<dbReference type="InterPro" id="IPR035901">
    <property type="entry name" value="GIY-YIG_endonuc_sf"/>
</dbReference>
<dbReference type="InterPro" id="IPR027520">
    <property type="entry name" value="Slx1"/>
</dbReference>
<dbReference type="InterPro" id="IPR050381">
    <property type="entry name" value="SLX1_endonuclease"/>
</dbReference>
<dbReference type="InterPro" id="IPR013083">
    <property type="entry name" value="Znf_RING/FYVE/PHD"/>
</dbReference>
<dbReference type="PANTHER" id="PTHR20208">
    <property type="entry name" value="STRUCTURE-SPECIFIC ENDONUCLEASE SUBUNIT SLX1"/>
    <property type="match status" value="1"/>
</dbReference>
<dbReference type="PANTHER" id="PTHR20208:SF13">
    <property type="entry name" value="STRUCTURE-SPECIFIC ENDONUCLEASE SUBUNIT SLX1"/>
    <property type="match status" value="1"/>
</dbReference>
<dbReference type="Pfam" id="PF01541">
    <property type="entry name" value="GIY-YIG"/>
    <property type="match status" value="1"/>
</dbReference>
<dbReference type="PROSITE" id="PS50164">
    <property type="entry name" value="GIY_YIG"/>
    <property type="match status" value="1"/>
</dbReference>
<name>SLX1_LEIMA</name>
<gene>
    <name type="ORF">LmjF25.1330</name>
    <name type="ORF">LmjF_25_1330</name>
</gene>
<sequence>MDTRFHCVYLLTSLDPQCEGDFYIGYSVNPLRRLRQHNGELVNGARRTGRRGRPWTIVCCVSGFPDDRTALKFEWCWQHPTASARLRHTIDILTGLRRLPYAVATLHLLVRASLFCQLDLTLHIFESAFLQEAAARAEVFLARRRGAFAVGGGLQAESPRVGTQQHSQRSSSLQGQADGVVTPPLPALDSQGELQGASTAAALATTTAASHLLPPLTPSLLLHVENTTREAFEDAYLSHDRCLLLPSAGMGVVVGEAGKEDSHMSASAGTSCPYDVSLLSQAARAEWSNASFASDSDDEDTRRLAPYCPSAGSSTPSPQRVRTAASPALLGYRSEERAGDGVWEASPGSSVGCGAALRSFSSPPPPRESSPRSASRPPVCTGINASASLAVDAPHGDVTAACPSSPAAAPAPQPRIPLRFADYGEVDFARAHAEEQHRLHHGLLPCSLCALPLQPSCLVYCSRAPFCTLRCHLSCLAMWMLYAEAEAAATIDGTDKSPALLSHAPPAPISPLRRLIPSQPCPCPLCGVLLHWGSLVKELKKRVVVERRLHAVQRRIRMEQRWQARLAHIEPTKRSTGAAMRRRQRARVGAAAALAKGAGKVPGAASTVPAPTMHAGPARRDAPRVSSPISFGEPTLTSFAAAASCPSPSASLAALSPTSASPISRHNGHSNTVTATHTAAAAAAASDASLLSLTDFCEEDWLLP</sequence>
<evidence type="ECO:0000255" key="1">
    <source>
        <dbReference type="HAMAP-Rule" id="MF_03100"/>
    </source>
</evidence>
<evidence type="ECO:0000256" key="2">
    <source>
        <dbReference type="SAM" id="MobiDB-lite"/>
    </source>
</evidence>
<keyword id="KW-0227">DNA damage</keyword>
<keyword id="KW-0233">DNA recombination</keyword>
<keyword id="KW-0234">DNA repair</keyword>
<keyword id="KW-0255">Endonuclease</keyword>
<keyword id="KW-0378">Hydrolase</keyword>
<keyword id="KW-0479">Metal-binding</keyword>
<keyword id="KW-0540">Nuclease</keyword>
<keyword id="KW-0539">Nucleus</keyword>
<keyword id="KW-1185">Reference proteome</keyword>
<keyword id="KW-0862">Zinc</keyword>
<keyword id="KW-0863">Zinc-finger</keyword>
<feature type="chain" id="PRO_0000383764" description="Structure-specific endonuclease subunit SLX1 homolog">
    <location>
        <begin position="1"/>
        <end position="704"/>
    </location>
</feature>
<feature type="domain" description="GIY-YIG" evidence="1">
    <location>
        <begin position="4"/>
        <end position="90"/>
    </location>
</feature>
<feature type="zinc finger region" description="SLX1-type" evidence="1">
    <location>
        <begin position="446"/>
        <end position="526"/>
    </location>
</feature>
<feature type="region of interest" description="Disordered" evidence="2">
    <location>
        <begin position="157"/>
        <end position="180"/>
    </location>
</feature>
<feature type="region of interest" description="Disordered" evidence="2">
    <location>
        <begin position="290"/>
        <end position="323"/>
    </location>
</feature>
<feature type="region of interest" description="Disordered" evidence="2">
    <location>
        <begin position="354"/>
        <end position="378"/>
    </location>
</feature>
<feature type="region of interest" description="Disordered" evidence="2">
    <location>
        <begin position="601"/>
        <end position="629"/>
    </location>
</feature>
<feature type="region of interest" description="Disordered" evidence="2">
    <location>
        <begin position="650"/>
        <end position="671"/>
    </location>
</feature>
<feature type="compositionally biased region" description="Polar residues" evidence="2">
    <location>
        <begin position="161"/>
        <end position="175"/>
    </location>
</feature>
<feature type="compositionally biased region" description="Polar residues" evidence="2">
    <location>
        <begin position="311"/>
        <end position="320"/>
    </location>
</feature>
<feature type="compositionally biased region" description="Low complexity" evidence="2">
    <location>
        <begin position="650"/>
        <end position="662"/>
    </location>
</feature>
<comment type="function">
    <text evidence="1">Catalytic subunit of a heterodimeric structure-specific endonuclease that resolves DNA secondary structures generated during DNA repair and recombination. Has endonuclease activity towards branched DNA substrates, introducing single-strand cuts in duplex DNA close to junctions with ss-DNA.</text>
</comment>
<comment type="cofactor">
    <cofactor evidence="1">
        <name>a divalent metal cation</name>
        <dbReference type="ChEBI" id="CHEBI:60240"/>
    </cofactor>
</comment>
<comment type="subunit">
    <text evidence="1">Forms a heterodimer with a member of the SLX4 family.</text>
</comment>
<comment type="subcellular location">
    <subcellularLocation>
        <location evidence="1">Nucleus</location>
    </subcellularLocation>
</comment>
<comment type="similarity">
    <text evidence="1">Belongs to the SLX1 family.</text>
</comment>
<reference key="1">
    <citation type="journal article" date="2005" name="Science">
        <title>The genome of the kinetoplastid parasite, Leishmania major.</title>
        <authorList>
            <person name="Ivens A.C."/>
            <person name="Peacock C.S."/>
            <person name="Worthey E.A."/>
            <person name="Murphy L."/>
            <person name="Aggarwal G."/>
            <person name="Berriman M."/>
            <person name="Sisk E."/>
            <person name="Rajandream M.A."/>
            <person name="Adlem E."/>
            <person name="Aert R."/>
            <person name="Anupama A."/>
            <person name="Apostolou Z."/>
            <person name="Attipoe P."/>
            <person name="Bason N."/>
            <person name="Bauser C."/>
            <person name="Beck A."/>
            <person name="Beverley S.M."/>
            <person name="Bianchettin G."/>
            <person name="Borzym K."/>
            <person name="Bothe G."/>
            <person name="Bruschi C.V."/>
            <person name="Collins M."/>
            <person name="Cadag E."/>
            <person name="Ciarloni L."/>
            <person name="Clayton C."/>
            <person name="Coulson R.M.R."/>
            <person name="Cronin A."/>
            <person name="Cruz A.K."/>
            <person name="Davies R.M."/>
            <person name="De Gaudenzi J."/>
            <person name="Dobson D.E."/>
            <person name="Duesterhoeft A."/>
            <person name="Fazelina G."/>
            <person name="Fosker N."/>
            <person name="Frasch A.C."/>
            <person name="Fraser A."/>
            <person name="Fuchs M."/>
            <person name="Gabel C."/>
            <person name="Goble A."/>
            <person name="Goffeau A."/>
            <person name="Harris D."/>
            <person name="Hertz-Fowler C."/>
            <person name="Hilbert H."/>
            <person name="Horn D."/>
            <person name="Huang Y."/>
            <person name="Klages S."/>
            <person name="Knights A."/>
            <person name="Kube M."/>
            <person name="Larke N."/>
            <person name="Litvin L."/>
            <person name="Lord A."/>
            <person name="Louie T."/>
            <person name="Marra M."/>
            <person name="Masuy D."/>
            <person name="Matthews K."/>
            <person name="Michaeli S."/>
            <person name="Mottram J.C."/>
            <person name="Mueller-Auer S."/>
            <person name="Munden H."/>
            <person name="Nelson S."/>
            <person name="Norbertczak H."/>
            <person name="Oliver K."/>
            <person name="O'neil S."/>
            <person name="Pentony M."/>
            <person name="Pohl T.M."/>
            <person name="Price C."/>
            <person name="Purnelle B."/>
            <person name="Quail M.A."/>
            <person name="Rabbinowitsch E."/>
            <person name="Reinhardt R."/>
            <person name="Rieger M."/>
            <person name="Rinta J."/>
            <person name="Robben J."/>
            <person name="Robertson L."/>
            <person name="Ruiz J.C."/>
            <person name="Rutter S."/>
            <person name="Saunders D."/>
            <person name="Schaefer M."/>
            <person name="Schein J."/>
            <person name="Schwartz D.C."/>
            <person name="Seeger K."/>
            <person name="Seyler A."/>
            <person name="Sharp S."/>
            <person name="Shin H."/>
            <person name="Sivam D."/>
            <person name="Squares R."/>
            <person name="Squares S."/>
            <person name="Tosato V."/>
            <person name="Vogt C."/>
            <person name="Volckaert G."/>
            <person name="Wambutt R."/>
            <person name="Warren T."/>
            <person name="Wedler H."/>
            <person name="Woodward J."/>
            <person name="Zhou S."/>
            <person name="Zimmermann W."/>
            <person name="Smith D.F."/>
            <person name="Blackwell J.M."/>
            <person name="Stuart K.D."/>
            <person name="Barrell B.G."/>
            <person name="Myler P.J."/>
        </authorList>
    </citation>
    <scope>NUCLEOTIDE SEQUENCE [LARGE SCALE GENOMIC DNA]</scope>
    <source>
        <strain>MHOM/IL/81/Friedlin</strain>
    </source>
</reference>
<protein>
    <recommendedName>
        <fullName evidence="1">Structure-specific endonuclease subunit SLX1 homolog</fullName>
        <ecNumber evidence="1">3.1.-.-</ecNumber>
    </recommendedName>
</protein>
<proteinExistence type="inferred from homology"/>
<organism>
    <name type="scientific">Leishmania major</name>
    <dbReference type="NCBI Taxonomy" id="5664"/>
    <lineage>
        <taxon>Eukaryota</taxon>
        <taxon>Discoba</taxon>
        <taxon>Euglenozoa</taxon>
        <taxon>Kinetoplastea</taxon>
        <taxon>Metakinetoplastina</taxon>
        <taxon>Trypanosomatida</taxon>
        <taxon>Trypanosomatidae</taxon>
        <taxon>Leishmaniinae</taxon>
        <taxon>Leishmania</taxon>
    </lineage>
</organism>
<accession>Q4Q9W0</accession>